<feature type="chain" id="PRO_0000304837" description="UPF0473 protein LGAS_0424">
    <location>
        <begin position="1"/>
        <end position="104"/>
    </location>
</feature>
<comment type="similarity">
    <text evidence="1">Belongs to the UPF0473 family.</text>
</comment>
<organism>
    <name type="scientific">Lactobacillus gasseri (strain ATCC 33323 / DSM 20243 / BCRC 14619 / CIP 102991 / JCM 1131 / KCTC 3163 / NCIMB 11718 / NCTC 13722 / AM63)</name>
    <dbReference type="NCBI Taxonomy" id="324831"/>
    <lineage>
        <taxon>Bacteria</taxon>
        <taxon>Bacillati</taxon>
        <taxon>Bacillota</taxon>
        <taxon>Bacilli</taxon>
        <taxon>Lactobacillales</taxon>
        <taxon>Lactobacillaceae</taxon>
        <taxon>Lactobacillus</taxon>
    </lineage>
</organism>
<evidence type="ECO:0000255" key="1">
    <source>
        <dbReference type="HAMAP-Rule" id="MF_01448"/>
    </source>
</evidence>
<sequence>MSEKINANQDNDRQITLVDDQGNEELFEILFTFTSEDYGKSYVLLYPAAVSDDDDVEVQAFSYDADEDGDVTSSDLHEISDDDEWNMVQGVLNTFLSDDRLSGE</sequence>
<protein>
    <recommendedName>
        <fullName evidence="1">UPF0473 protein LGAS_0424</fullName>
    </recommendedName>
</protein>
<dbReference type="EMBL" id="CP000413">
    <property type="protein sequence ID" value="ABJ59829.1"/>
    <property type="molecule type" value="Genomic_DNA"/>
</dbReference>
<dbReference type="RefSeq" id="WP_003647715.1">
    <property type="nucleotide sequence ID" value="NZ_WBMG01000012.1"/>
</dbReference>
<dbReference type="GeneID" id="29639103"/>
<dbReference type="KEGG" id="lga:LGAS_0424"/>
<dbReference type="HOGENOM" id="CLU_146610_2_1_9"/>
<dbReference type="BioCyc" id="LGAS324831:G1G6Y-424-MONOMER"/>
<dbReference type="Proteomes" id="UP000000664">
    <property type="component" value="Chromosome"/>
</dbReference>
<dbReference type="HAMAP" id="MF_01448">
    <property type="entry name" value="UPF0473"/>
    <property type="match status" value="1"/>
</dbReference>
<dbReference type="InterPro" id="IPR018247">
    <property type="entry name" value="EF_Hand_1_Ca_BS"/>
</dbReference>
<dbReference type="InterPro" id="IPR009711">
    <property type="entry name" value="UPF0473"/>
</dbReference>
<dbReference type="NCBIfam" id="NF010217">
    <property type="entry name" value="PRK13678.1-4"/>
    <property type="match status" value="1"/>
</dbReference>
<dbReference type="PANTHER" id="PTHR40066">
    <property type="entry name" value="UPF0473 PROTEIN CBO2561/CLC_2432"/>
    <property type="match status" value="1"/>
</dbReference>
<dbReference type="PANTHER" id="PTHR40066:SF1">
    <property type="entry name" value="UPF0473 PROTEIN CBO2561_CLC_2432"/>
    <property type="match status" value="1"/>
</dbReference>
<dbReference type="Pfam" id="PF06949">
    <property type="entry name" value="DUF1292"/>
    <property type="match status" value="1"/>
</dbReference>
<proteinExistence type="inferred from homology"/>
<reference key="1">
    <citation type="journal article" date="2006" name="Proc. Natl. Acad. Sci. U.S.A.">
        <title>Comparative genomics of the lactic acid bacteria.</title>
        <authorList>
            <person name="Makarova K.S."/>
            <person name="Slesarev A."/>
            <person name="Wolf Y.I."/>
            <person name="Sorokin A."/>
            <person name="Mirkin B."/>
            <person name="Koonin E.V."/>
            <person name="Pavlov A."/>
            <person name="Pavlova N."/>
            <person name="Karamychev V."/>
            <person name="Polouchine N."/>
            <person name="Shakhova V."/>
            <person name="Grigoriev I."/>
            <person name="Lou Y."/>
            <person name="Rohksar D."/>
            <person name="Lucas S."/>
            <person name="Huang K."/>
            <person name="Goodstein D.M."/>
            <person name="Hawkins T."/>
            <person name="Plengvidhya V."/>
            <person name="Welker D."/>
            <person name="Hughes J."/>
            <person name="Goh Y."/>
            <person name="Benson A."/>
            <person name="Baldwin K."/>
            <person name="Lee J.-H."/>
            <person name="Diaz-Muniz I."/>
            <person name="Dosti B."/>
            <person name="Smeianov V."/>
            <person name="Wechter W."/>
            <person name="Barabote R."/>
            <person name="Lorca G."/>
            <person name="Altermann E."/>
            <person name="Barrangou R."/>
            <person name="Ganesan B."/>
            <person name="Xie Y."/>
            <person name="Rawsthorne H."/>
            <person name="Tamir D."/>
            <person name="Parker C."/>
            <person name="Breidt F."/>
            <person name="Broadbent J.R."/>
            <person name="Hutkins R."/>
            <person name="O'Sullivan D."/>
            <person name="Steele J."/>
            <person name="Unlu G."/>
            <person name="Saier M.H. Jr."/>
            <person name="Klaenhammer T."/>
            <person name="Richardson P."/>
            <person name="Kozyavkin S."/>
            <person name="Weimer B.C."/>
            <person name="Mills D.A."/>
        </authorList>
    </citation>
    <scope>NUCLEOTIDE SEQUENCE [LARGE SCALE GENOMIC DNA]</scope>
    <source>
        <strain>ATCC 33323 / DSM 20243 / BCRC 14619 / CIP 102991 / JCM 1131 / KCTC 3163 / NCIMB 11718 / NCTC 13722 / AM63</strain>
    </source>
</reference>
<gene>
    <name type="ordered locus">LGAS_0424</name>
</gene>
<accession>Q045P3</accession>
<name>Y424_LACGA</name>